<organism>
    <name type="scientific">Sus scrofa</name>
    <name type="common">Pig</name>
    <dbReference type="NCBI Taxonomy" id="9823"/>
    <lineage>
        <taxon>Eukaryota</taxon>
        <taxon>Metazoa</taxon>
        <taxon>Chordata</taxon>
        <taxon>Craniata</taxon>
        <taxon>Vertebrata</taxon>
        <taxon>Euteleostomi</taxon>
        <taxon>Mammalia</taxon>
        <taxon>Eutheria</taxon>
        <taxon>Laurasiatheria</taxon>
        <taxon>Artiodactyla</taxon>
        <taxon>Suina</taxon>
        <taxon>Suidae</taxon>
        <taxon>Sus</taxon>
    </lineage>
</organism>
<sequence length="541" mass="58930">MSQLVECVPNFSEGKNQEVIDAISRAVAQTPGCVLLDVDSGPSTNRTVYTFVGRPEDVVEGALNAARAAYQLIDMSRHHGEHPRMGALDVCPFIPVRGVTMDECVRCAQAFGQRLAEELGVPVYLYGEAARTAGRQSLPALRAGEYEALPEKLKQAEWAPDFGPSAFVPSWGATVAGARKFLLAFNINLLSTREQAHRIALDLREQGRGKDQPGRLKKVQAIGWYLDEKNLAQVSTNLLDFEVTGLHTVFEETCREAQELSLPVVGSQLVGLVPLKALLDAAAFYCEKENLFLLQDEHRIRLVVNRLGLDSLAPFKPKERIIEYLVPEAGPEQSLLHKPLRTFVREVGSRSAAPGAGSVAAATAAMGAALASMVGLMTYGRRQFEHLDATMRRLIPPFHAASAKLTSLVDADARAFEAYLKAMKLPKDTPEDKDRRAAALQEGLRQAVAVPLALAETVASLWPALQELALCGNLACRSDLQVAAKALETGVFGAYFNVLINLKDVTDDAFKAQVRQRISSLLQEAKTQAALVLDRLEARQA</sequence>
<accession>P53603</accession>
<dbReference type="EC" id="2.1.2.5" evidence="6"/>
<dbReference type="EC" id="4.3.1.4" evidence="6"/>
<dbReference type="EMBL" id="L16507">
    <property type="protein sequence ID" value="AAA31034.1"/>
    <property type="molecule type" value="mRNA"/>
</dbReference>
<dbReference type="PIR" id="A48717">
    <property type="entry name" value="A48717"/>
</dbReference>
<dbReference type="RefSeq" id="NP_999440.1">
    <property type="nucleotide sequence ID" value="NM_214275.1"/>
</dbReference>
<dbReference type="PDB" id="1QD1">
    <property type="method" value="X-ray"/>
    <property type="resolution" value="1.70 A"/>
    <property type="chains" value="A/B=2-326"/>
</dbReference>
<dbReference type="PDBsum" id="1QD1"/>
<dbReference type="SMR" id="P53603"/>
<dbReference type="FunCoup" id="P53603">
    <property type="interactions" value="284"/>
</dbReference>
<dbReference type="STRING" id="9823.ENSSSCP00000022108"/>
<dbReference type="PaxDb" id="9823-ENSSSCP00000022108"/>
<dbReference type="PeptideAtlas" id="P53603"/>
<dbReference type="GeneID" id="397517"/>
<dbReference type="KEGG" id="ssc:397517"/>
<dbReference type="CTD" id="10841"/>
<dbReference type="eggNOG" id="ENOG502QQBY">
    <property type="taxonomic scope" value="Eukaryota"/>
</dbReference>
<dbReference type="InParanoid" id="P53603"/>
<dbReference type="OrthoDB" id="48036at2759"/>
<dbReference type="BRENDA" id="2.1.2.5">
    <property type="organism ID" value="6170"/>
</dbReference>
<dbReference type="BRENDA" id="4.3.1.4">
    <property type="organism ID" value="6170"/>
</dbReference>
<dbReference type="SABIO-RK" id="P53603"/>
<dbReference type="UniPathway" id="UPA00379">
    <property type="reaction ID" value="UER00555"/>
</dbReference>
<dbReference type="EvolutionaryTrace" id="P53603"/>
<dbReference type="Proteomes" id="UP000008227">
    <property type="component" value="Unplaced"/>
</dbReference>
<dbReference type="Proteomes" id="UP000314985">
    <property type="component" value="Unplaced"/>
</dbReference>
<dbReference type="Proteomes" id="UP000694570">
    <property type="component" value="Unplaced"/>
</dbReference>
<dbReference type="Proteomes" id="UP000694571">
    <property type="component" value="Unplaced"/>
</dbReference>
<dbReference type="Proteomes" id="UP000694720">
    <property type="component" value="Unplaced"/>
</dbReference>
<dbReference type="Proteomes" id="UP000694722">
    <property type="component" value="Unplaced"/>
</dbReference>
<dbReference type="Proteomes" id="UP000694723">
    <property type="component" value="Unplaced"/>
</dbReference>
<dbReference type="Proteomes" id="UP000694724">
    <property type="component" value="Unplaced"/>
</dbReference>
<dbReference type="Proteomes" id="UP000694725">
    <property type="component" value="Unplaced"/>
</dbReference>
<dbReference type="Proteomes" id="UP000694726">
    <property type="component" value="Unplaced"/>
</dbReference>
<dbReference type="Proteomes" id="UP000694727">
    <property type="component" value="Unplaced"/>
</dbReference>
<dbReference type="Proteomes" id="UP000694728">
    <property type="component" value="Unplaced"/>
</dbReference>
<dbReference type="GO" id="GO:0005814">
    <property type="term" value="C:centriole"/>
    <property type="evidence" value="ECO:0007669"/>
    <property type="project" value="UniProtKB-SubCell"/>
</dbReference>
<dbReference type="GO" id="GO:0005829">
    <property type="term" value="C:cytosol"/>
    <property type="evidence" value="ECO:0007669"/>
    <property type="project" value="UniProtKB-SubCell"/>
</dbReference>
<dbReference type="GO" id="GO:0005794">
    <property type="term" value="C:Golgi apparatus"/>
    <property type="evidence" value="ECO:0007669"/>
    <property type="project" value="UniProtKB-SubCell"/>
</dbReference>
<dbReference type="GO" id="GO:0005542">
    <property type="term" value="F:folic acid binding"/>
    <property type="evidence" value="ECO:0007669"/>
    <property type="project" value="UniProtKB-KW"/>
</dbReference>
<dbReference type="GO" id="GO:0030412">
    <property type="term" value="F:formimidoyltetrahydrofolate cyclodeaminase activity"/>
    <property type="evidence" value="ECO:0000314"/>
    <property type="project" value="BHF-UCL"/>
</dbReference>
<dbReference type="GO" id="GO:0030409">
    <property type="term" value="F:glutamate formimidoyltransferase activity"/>
    <property type="evidence" value="ECO:0000314"/>
    <property type="project" value="BHF-UCL"/>
</dbReference>
<dbReference type="GO" id="GO:0006548">
    <property type="term" value="P:L-histidine catabolic process"/>
    <property type="evidence" value="ECO:0000305"/>
    <property type="project" value="BHF-UCL"/>
</dbReference>
<dbReference type="GO" id="GO:0019556">
    <property type="term" value="P:L-histidine catabolic process to glutamate and formamide"/>
    <property type="evidence" value="ECO:0007669"/>
    <property type="project" value="UniProtKB-UniPathway"/>
</dbReference>
<dbReference type="GO" id="GO:0019557">
    <property type="term" value="P:L-histidine catabolic process to glutamate and formate"/>
    <property type="evidence" value="ECO:0007669"/>
    <property type="project" value="UniProtKB-UniPathway"/>
</dbReference>
<dbReference type="FunFam" id="1.20.120.680:FF:000001">
    <property type="entry name" value="Formimidoyltransferase cyclodeaminase"/>
    <property type="match status" value="1"/>
</dbReference>
<dbReference type="FunFam" id="3.30.70.670:FF:000001">
    <property type="entry name" value="Formimidoyltransferase cyclodeaminase"/>
    <property type="match status" value="1"/>
</dbReference>
<dbReference type="FunFam" id="3.30.990.10:FF:000001">
    <property type="entry name" value="Formimidoyltransferase cyclodeaminase"/>
    <property type="match status" value="1"/>
</dbReference>
<dbReference type="Gene3D" id="1.20.120.680">
    <property type="entry name" value="Formiminotetrahydrofolate cyclodeaminase monomer, up-and-down helical bundle"/>
    <property type="match status" value="1"/>
</dbReference>
<dbReference type="Gene3D" id="3.30.70.670">
    <property type="entry name" value="Formiminotransferase, C-terminal subdomain"/>
    <property type="match status" value="1"/>
</dbReference>
<dbReference type="Gene3D" id="3.30.990.10">
    <property type="entry name" value="Formiminotransferase, N-terminal subdomain"/>
    <property type="match status" value="1"/>
</dbReference>
<dbReference type="InterPro" id="IPR007044">
    <property type="entry name" value="Cyclodeamin/CycHdrlase"/>
</dbReference>
<dbReference type="InterPro" id="IPR013802">
    <property type="entry name" value="Formiminotransferase_C"/>
</dbReference>
<dbReference type="InterPro" id="IPR037070">
    <property type="entry name" value="Formiminotransferase_C_sf"/>
</dbReference>
<dbReference type="InterPro" id="IPR004227">
    <property type="entry name" value="Formiminotransferase_cat"/>
</dbReference>
<dbReference type="InterPro" id="IPR012886">
    <property type="entry name" value="Formiminotransferase_N"/>
</dbReference>
<dbReference type="InterPro" id="IPR037064">
    <property type="entry name" value="Formiminotransferase_N_sf"/>
</dbReference>
<dbReference type="InterPro" id="IPR022384">
    <property type="entry name" value="FormiminoTrfase_cat_dom_sf"/>
</dbReference>
<dbReference type="InterPro" id="IPR036178">
    <property type="entry name" value="Formintransfe-cycloase-like_sf"/>
</dbReference>
<dbReference type="InterPro" id="IPR051623">
    <property type="entry name" value="FTCD"/>
</dbReference>
<dbReference type="NCBIfam" id="TIGR02024">
    <property type="entry name" value="FtcD"/>
    <property type="match status" value="1"/>
</dbReference>
<dbReference type="PANTHER" id="PTHR12234:SF0">
    <property type="entry name" value="FORMIMIDOYLTRANSFERASE-CYCLODEAMINASE"/>
    <property type="match status" value="1"/>
</dbReference>
<dbReference type="PANTHER" id="PTHR12234">
    <property type="entry name" value="FORMIMINOTRANSFERASE-CYCLODEAMINASE"/>
    <property type="match status" value="1"/>
</dbReference>
<dbReference type="Pfam" id="PF02971">
    <property type="entry name" value="FTCD"/>
    <property type="match status" value="1"/>
</dbReference>
<dbReference type="Pfam" id="PF04961">
    <property type="entry name" value="FTCD_C"/>
    <property type="match status" value="1"/>
</dbReference>
<dbReference type="Pfam" id="PF07837">
    <property type="entry name" value="FTCD_N"/>
    <property type="match status" value="1"/>
</dbReference>
<dbReference type="SMART" id="SM01221">
    <property type="entry name" value="FTCD"/>
    <property type="match status" value="1"/>
</dbReference>
<dbReference type="SMART" id="SM01222">
    <property type="entry name" value="FTCD_N"/>
    <property type="match status" value="1"/>
</dbReference>
<dbReference type="SUPFAM" id="SSF55116">
    <property type="entry name" value="Formiminotransferase domain of formiminotransferase-cyclodeaminase"/>
    <property type="match status" value="2"/>
</dbReference>
<dbReference type="SUPFAM" id="SSF101262">
    <property type="entry name" value="Methenyltetrahydrofolate cyclohydrolase-like"/>
    <property type="match status" value="1"/>
</dbReference>
<gene>
    <name type="primary">FTCD</name>
</gene>
<proteinExistence type="evidence at protein level"/>
<protein>
    <recommendedName>
        <fullName evidence="8">Formimidoyltransferase-cyclodeaminase</fullName>
    </recommendedName>
    <alternativeName>
        <fullName>Formiminotransferase-cyclodeaminase</fullName>
        <shortName>FTCD</shortName>
    </alternativeName>
    <domain>
        <recommendedName>
            <fullName evidence="8">Glutamate formimidoyltransferase</fullName>
            <ecNumber evidence="6">2.1.2.5</ecNumber>
        </recommendedName>
        <alternativeName>
            <fullName>Glutamate formiminotransferase</fullName>
        </alternativeName>
        <alternativeName>
            <fullName>Glutamate formyltransferase</fullName>
        </alternativeName>
    </domain>
    <domain>
        <recommendedName>
            <fullName evidence="8">Formimidoyltetrahydrofolate cyclodeaminase</fullName>
            <ecNumber evidence="6">4.3.1.4</ecNumber>
        </recommendedName>
        <alternativeName>
            <fullName>Formiminotetrahydrofolate cyclodeaminase</fullName>
        </alternativeName>
    </domain>
</protein>
<keyword id="KW-0002">3D-structure</keyword>
<keyword id="KW-0963">Cytoplasm</keyword>
<keyword id="KW-0206">Cytoskeleton</keyword>
<keyword id="KW-0903">Direct protein sequencing</keyword>
<keyword id="KW-0290">Folate-binding</keyword>
<keyword id="KW-0333">Golgi apparatus</keyword>
<keyword id="KW-0369">Histidine metabolism</keyword>
<keyword id="KW-0456">Lyase</keyword>
<keyword id="KW-0511">Multifunctional enzyme</keyword>
<keyword id="KW-0597">Phosphoprotein</keyword>
<keyword id="KW-1185">Reference proteome</keyword>
<keyword id="KW-0808">Transferase</keyword>
<reference key="1">
    <citation type="journal article" date="1993" name="J. Biol. Chem.">
        <title>The nucleotide sequence of porcine formiminotransferase cyclodeaminase. Expression and purification from Escherichia coli.</title>
        <authorList>
            <person name="Murley L.L."/>
            <person name="Mejia N.R."/>
            <person name="Mackenzie R.E."/>
        </authorList>
    </citation>
    <scope>NUCLEOTIDE SEQUENCE [MRNA]</scope>
    <scope>PROTEIN SEQUENCE OF 392-410 AND 424-453</scope>
    <scope>FUNCTION</scope>
    <scope>CATALYTIC ACTIVITY</scope>
    <scope>PATHWAY</scope>
    <source>
        <strain>Yucatan</strain>
        <tissue>Liver</tissue>
    </source>
</reference>
<reference key="2">
    <citation type="journal article" date="2000" name="Structure">
        <title>The crystal structure of the formiminotransferase domain of formiminotransferase-cyclodeaminase: implications for substrate channeling in a bifunctional enzyme.</title>
        <authorList>
            <person name="Kohls D."/>
            <person name="Sulea T."/>
            <person name="Purisima E.O."/>
            <person name="MacKenzie R.E."/>
            <person name="Vrielink A."/>
        </authorList>
    </citation>
    <scope>X-RAY CRYSTALLOGRAPHY (1.7 ANGSTROMS) OF 2-326</scope>
</reference>
<feature type="chain" id="PRO_0000087361" description="Formimidoyltransferase-cyclodeaminase">
    <location>
        <begin position="1"/>
        <end position="541"/>
    </location>
</feature>
<feature type="region of interest" description="Formiminotransferase N-subdomain" evidence="1">
    <location>
        <begin position="1"/>
        <end position="181"/>
    </location>
</feature>
<feature type="region of interest" description="Formiminotransferase C-subdomain" evidence="1">
    <location>
        <begin position="182"/>
        <end position="326"/>
    </location>
</feature>
<feature type="region of interest" description="Linker" evidence="1">
    <location>
        <begin position="327"/>
        <end position="334"/>
    </location>
</feature>
<feature type="region of interest" description="Cyclodeaminase/cyclohydrolase" evidence="1">
    <location>
        <begin position="335"/>
        <end position="541"/>
    </location>
</feature>
<feature type="active site" description="For formimidoyltransferase activity" evidence="7">
    <location>
        <position position="82"/>
    </location>
</feature>
<feature type="active site" description="For cyclodeaminase activity" evidence="1">
    <location>
        <position position="412"/>
    </location>
</feature>
<feature type="binding site" evidence="5">
    <location>
        <begin position="163"/>
        <end position="172"/>
    </location>
    <ligand>
        <name>folate</name>
        <dbReference type="ChEBI" id="CHEBI:62501"/>
    </ligand>
</feature>
<feature type="modified residue" description="Phosphoserine" evidence="2">
    <location>
        <position position="520"/>
    </location>
</feature>
<feature type="strand" evidence="9">
    <location>
        <begin position="4"/>
        <end position="7"/>
    </location>
</feature>
<feature type="strand" evidence="9">
    <location>
        <begin position="10"/>
        <end position="12"/>
    </location>
</feature>
<feature type="helix" evidence="9">
    <location>
        <begin position="17"/>
        <end position="28"/>
    </location>
</feature>
<feature type="strand" evidence="9">
    <location>
        <begin position="34"/>
        <end position="41"/>
    </location>
</feature>
<feature type="turn" evidence="9">
    <location>
        <begin position="42"/>
        <end position="45"/>
    </location>
</feature>
<feature type="strand" evidence="9">
    <location>
        <begin position="46"/>
        <end position="53"/>
    </location>
</feature>
<feature type="helix" evidence="9">
    <location>
        <begin position="55"/>
        <end position="72"/>
    </location>
</feature>
<feature type="helix" evidence="9">
    <location>
        <begin position="75"/>
        <end position="77"/>
    </location>
</feature>
<feature type="strand" evidence="9">
    <location>
        <begin position="85"/>
        <end position="98"/>
    </location>
</feature>
<feature type="helix" evidence="9">
    <location>
        <begin position="101"/>
        <end position="119"/>
    </location>
</feature>
<feature type="strand" evidence="9">
    <location>
        <begin position="123"/>
        <end position="127"/>
    </location>
</feature>
<feature type="helix" evidence="9">
    <location>
        <begin position="133"/>
        <end position="135"/>
    </location>
</feature>
<feature type="helix" evidence="9">
    <location>
        <begin position="138"/>
        <end position="142"/>
    </location>
</feature>
<feature type="helix" evidence="9">
    <location>
        <begin position="145"/>
        <end position="152"/>
    </location>
</feature>
<feature type="helix" evidence="9">
    <location>
        <begin position="156"/>
        <end position="158"/>
    </location>
</feature>
<feature type="strand" evidence="9">
    <location>
        <begin position="161"/>
        <end position="163"/>
    </location>
</feature>
<feature type="turn" evidence="9">
    <location>
        <begin position="169"/>
        <end position="171"/>
    </location>
</feature>
<feature type="strand" evidence="9">
    <location>
        <begin position="174"/>
        <end position="178"/>
    </location>
</feature>
<feature type="strand" evidence="9">
    <location>
        <begin position="183"/>
        <end position="191"/>
    </location>
</feature>
<feature type="helix" evidence="9">
    <location>
        <begin position="193"/>
        <end position="203"/>
    </location>
</feature>
<feature type="strand" evidence="9">
    <location>
        <begin position="219"/>
        <end position="226"/>
    </location>
</feature>
<feature type="turn" evidence="9">
    <location>
        <begin position="227"/>
        <end position="230"/>
    </location>
</feature>
<feature type="strand" evidence="9">
    <location>
        <begin position="231"/>
        <end position="239"/>
    </location>
</feature>
<feature type="turn" evidence="9">
    <location>
        <begin position="241"/>
        <end position="243"/>
    </location>
</feature>
<feature type="helix" evidence="9">
    <location>
        <begin position="246"/>
        <end position="259"/>
    </location>
</feature>
<feature type="strand" evidence="9">
    <location>
        <begin position="264"/>
        <end position="271"/>
    </location>
</feature>
<feature type="helix" evidence="9">
    <location>
        <begin position="275"/>
        <end position="289"/>
    </location>
</feature>
<feature type="helix" evidence="9">
    <location>
        <begin position="296"/>
        <end position="307"/>
    </location>
</feature>
<feature type="turn" evidence="9">
    <location>
        <begin position="308"/>
        <end position="310"/>
    </location>
</feature>
<feature type="strand" evidence="9">
    <location>
        <begin position="311"/>
        <end position="313"/>
    </location>
</feature>
<feature type="helix" evidence="9">
    <location>
        <begin position="317"/>
        <end position="320"/>
    </location>
</feature>
<feature type="helix" evidence="9">
    <location>
        <begin position="322"/>
        <end position="325"/>
    </location>
</feature>
<comment type="function">
    <text evidence="6">Folate-dependent enzyme, that displays both transferase and deaminase activity. Serves to channel one-carbon units from formiminoglutamate to the folate pool.</text>
</comment>
<comment type="function">
    <text evidence="2">Binds and promotes bundling of vimentin filaments originating from the Golgi.</text>
</comment>
<comment type="catalytic activity">
    <reaction evidence="6">
        <text>5-formimidoyltetrahydrofolate + L-glutamate = N-formimidoyl-L-glutamate + (6S)-5,6,7,8-tetrahydrofolate</text>
        <dbReference type="Rhea" id="RHEA:15097"/>
        <dbReference type="ChEBI" id="CHEBI:29985"/>
        <dbReference type="ChEBI" id="CHEBI:57453"/>
        <dbReference type="ChEBI" id="CHEBI:57456"/>
        <dbReference type="ChEBI" id="CHEBI:58928"/>
        <dbReference type="EC" id="2.1.2.5"/>
    </reaction>
    <physiologicalReaction direction="right-to-left" evidence="8">
        <dbReference type="Rhea" id="RHEA:15099"/>
    </physiologicalReaction>
</comment>
<comment type="catalytic activity">
    <reaction evidence="6">
        <text>5-formimidoyltetrahydrofolate + 2 H(+) = (6R)-5,10-methenyltetrahydrofolate + NH4(+)</text>
        <dbReference type="Rhea" id="RHEA:22736"/>
        <dbReference type="ChEBI" id="CHEBI:15378"/>
        <dbReference type="ChEBI" id="CHEBI:28938"/>
        <dbReference type="ChEBI" id="CHEBI:57455"/>
        <dbReference type="ChEBI" id="CHEBI:57456"/>
        <dbReference type="EC" id="4.3.1.4"/>
    </reaction>
    <physiologicalReaction direction="left-to-right" evidence="8">
        <dbReference type="Rhea" id="RHEA:22737"/>
    </physiologicalReaction>
</comment>
<comment type="pathway">
    <text evidence="8">Amino-acid degradation; L-histidine degradation into L-glutamate; L-glutamate from N-formimidoyl-L-glutamate (transferase route): step 1/1.</text>
</comment>
<comment type="subunit">
    <text evidence="2">Homooctamer, including four polyglutamate binding sites. The subunits are arranged as a tetramer of dimers, and form a planar ring-shaped structure.</text>
</comment>
<comment type="subcellular location">
    <subcellularLocation>
        <location evidence="4">Cytoplasm</location>
        <location evidence="4">Cytosol</location>
    </subcellularLocation>
    <subcellularLocation>
        <location evidence="4">Golgi apparatus</location>
    </subcellularLocation>
    <subcellularLocation>
        <location evidence="3">Cytoplasm</location>
        <location evidence="3">Cytoskeleton</location>
        <location evidence="3">Microtubule organizing center</location>
        <location evidence="3">Centrosome</location>
        <location evidence="3">Centriole</location>
    </subcellularLocation>
    <text evidence="3">More abundantly located around the mother centriole.</text>
</comment>
<comment type="similarity">
    <text evidence="7">In the C-terminal section; belongs to the cyclodeaminase/cyclohydrolase family.</text>
</comment>
<comment type="similarity">
    <text evidence="7">In the N-terminal section; belongs to the formiminotransferase family.</text>
</comment>
<name>FTCD_PIG</name>
<evidence type="ECO:0000250" key="1"/>
<evidence type="ECO:0000250" key="2">
    <source>
        <dbReference type="UniProtKB" id="O88618"/>
    </source>
</evidence>
<evidence type="ECO:0000250" key="3">
    <source>
        <dbReference type="UniProtKB" id="O95954"/>
    </source>
</evidence>
<evidence type="ECO:0000250" key="4">
    <source>
        <dbReference type="UniProtKB" id="Q9YH58"/>
    </source>
</evidence>
<evidence type="ECO:0000255" key="5"/>
<evidence type="ECO:0000269" key="6">
    <source>
    </source>
</evidence>
<evidence type="ECO:0000305" key="7"/>
<evidence type="ECO:0000305" key="8">
    <source>
    </source>
</evidence>
<evidence type="ECO:0007829" key="9">
    <source>
        <dbReference type="PDB" id="1QD1"/>
    </source>
</evidence>